<dbReference type="EMBL" id="AF095781">
    <property type="protein sequence ID" value="AAF03045.1"/>
    <property type="molecule type" value="Genomic_DNA"/>
</dbReference>
<dbReference type="EMBL" id="AF114024">
    <property type="protein sequence ID" value="AAF24057.1"/>
    <property type="molecule type" value="mRNA"/>
</dbReference>
<dbReference type="PDB" id="1WM7">
    <property type="method" value="NMR"/>
    <property type="chains" value="A=29-57"/>
</dbReference>
<dbReference type="PDBsum" id="1WM7"/>
<dbReference type="SMR" id="Q9U8D2"/>
<dbReference type="EvolutionaryTrace" id="Q9U8D2"/>
<dbReference type="GO" id="GO:0005576">
    <property type="term" value="C:extracellular region"/>
    <property type="evidence" value="ECO:0007669"/>
    <property type="project" value="UniProtKB-SubCell"/>
</dbReference>
<dbReference type="GO" id="GO:0008200">
    <property type="term" value="F:ion channel inhibitor activity"/>
    <property type="evidence" value="ECO:0007669"/>
    <property type="project" value="InterPro"/>
</dbReference>
<dbReference type="GO" id="GO:0015459">
    <property type="term" value="F:potassium channel regulator activity"/>
    <property type="evidence" value="ECO:0007669"/>
    <property type="project" value="UniProtKB-KW"/>
</dbReference>
<dbReference type="GO" id="GO:0090729">
    <property type="term" value="F:toxin activity"/>
    <property type="evidence" value="ECO:0007669"/>
    <property type="project" value="UniProtKB-KW"/>
</dbReference>
<dbReference type="InterPro" id="IPR036574">
    <property type="entry name" value="Scorpion_toxin-like_sf"/>
</dbReference>
<dbReference type="InterPro" id="IPR008911">
    <property type="entry name" value="Toxin_alpha-KTx_8/9"/>
</dbReference>
<dbReference type="Pfam" id="PF05453">
    <property type="entry name" value="Toxin_6"/>
    <property type="match status" value="1"/>
</dbReference>
<dbReference type="SUPFAM" id="SSF57095">
    <property type="entry name" value="Scorpion toxin-like"/>
    <property type="match status" value="1"/>
</dbReference>
<protein>
    <recommendedName>
        <fullName evidence="8">Potassium channel toxin alpha-KTx 8.2</fullName>
    </recommendedName>
    <alternativeName>
        <fullName evidence="6 7">Neurotoxin BmP01</fullName>
    </alternativeName>
</protein>
<reference key="1">
    <citation type="journal article" date="1999" name="FEBS Lett.">
        <title>Genomic organization of three neurotoxins active on small conductance Ca2+-activated potassium channels from the scorpion Buthus martensi Karsch.</title>
        <authorList>
            <person name="Wu J.-J."/>
            <person name="Dai L."/>
            <person name="Lan Z.-D."/>
            <person name="Chi C.-W."/>
        </authorList>
    </citation>
    <scope>NUCLEOTIDE SEQUENCE [GENOMIC DNA]</scope>
    <source>
        <tissue>Venom gland</tissue>
    </source>
</reference>
<reference key="2">
    <citation type="journal article" date="1999" name="Kexue Tongbao">
        <title>Molecular characterization of a K+ channel blocker from Buthus martensii.</title>
        <authorList>
            <person name="Zhu S.-Y."/>
            <person name="Zeng X.-C."/>
            <person name="Li W.-X."/>
            <person name="Jiang D.-H."/>
        </authorList>
    </citation>
    <scope>NUCLEOTIDE SEQUENCE [MRNA]</scope>
    <source>
        <tissue>Venom gland</tissue>
    </source>
</reference>
<reference key="3">
    <citation type="journal article" date="2015" name="Toxins">
        <title>Scorpion toxin, BmP01, induces pain by targeting TRPV1 channel.</title>
        <authorList>
            <person name="Hakim M.A."/>
            <person name="Jiang W."/>
            <person name="Luo L."/>
            <person name="Li B."/>
            <person name="Yang S."/>
            <person name="Song Y."/>
            <person name="Lai R."/>
        </authorList>
    </citation>
    <scope>NUCLEOTIDE SEQUENCE [MRNA]</scope>
    <scope>PROTEIN SEQUENCE OF 29-46</scope>
    <scope>FUNCTION</scope>
    <scope>BIOASSAY</scope>
    <scope>MASS SPECTROMETRY</scope>
    <source>
        <tissue>Venom</tissue>
        <tissue>Venom gland</tissue>
    </source>
</reference>
<reference key="4">
    <citation type="journal article" date="1997" name="Eur. J. Biochem.">
        <title>Characterization of four toxins from Buthus martensi scorpion venom, which act on apamin-sensitive Ca2+-activated K+ channels.</title>
        <authorList>
            <person name="Romi-Lebrun R."/>
            <person name="Martin-Eauclaire M.-F."/>
            <person name="Escoubas P."/>
            <person name="Wu F.Q."/>
            <person name="Lebrun B."/>
            <person name="Hisada M."/>
            <person name="Nakajima T."/>
        </authorList>
    </citation>
    <scope>PROTEIN SEQUENCE OF 29-57</scope>
    <scope>MASS SPECTROMETRY</scope>
    <scope>SUBCELLULAR LOCATION</scope>
    <scope>BIOASSAY</scope>
    <source>
        <tissue>Venom</tissue>
    </source>
</reference>
<reference key="5">
    <citation type="journal article" date="2000" name="Biochem. Biophys. Res. Commun.">
        <title>Solution structure of BmP01 from the venom of scorpion Buthus martensii Karsch.</title>
        <authorList>
            <person name="Wu G."/>
            <person name="Li Y."/>
            <person name="Wei D."/>
            <person name="He F."/>
            <person name="Jiang S."/>
            <person name="Hu G."/>
            <person name="Wu H."/>
        </authorList>
    </citation>
    <scope>PROTEIN SEQUENCE OF 29-38</scope>
    <scope>STRUCTURE BY NMR OF 29-57</scope>
    <scope>DISULFIDE BONDS</scope>
    <scope>MASS SPECTROMETRY</scope>
</reference>
<reference key="6">
    <citation type="journal article" date="2011" name="Mol. Cell. Proteomics">
        <title>Molecular diversity and functional evolution of scorpion potassium channel toxins.</title>
        <authorList>
            <person name="Zhu S."/>
            <person name="Peigneur S."/>
            <person name="Gao B."/>
            <person name="Luo L."/>
            <person name="Jin D."/>
            <person name="Zhao Y."/>
            <person name="Tytgat J."/>
        </authorList>
    </citation>
    <scope>PROTEIN SEQUENCE OF 29-38</scope>
    <scope>MASS SPECTROMETRY</scope>
    <scope>FUNCTION</scope>
    <source>
        <tissue>Venom</tissue>
    </source>
</reference>
<reference key="7">
    <citation type="journal article" date="2012" name="PLoS ONE">
        <title>Structural and functional diversity of acidic scorpion potassium channel toxins.</title>
        <authorList>
            <person name="Chen Z.Y."/>
            <person name="Zeng D.Y."/>
            <person name="Hu Y.T."/>
            <person name="He Y.W."/>
            <person name="Pan N."/>
            <person name="Ding J.P."/>
            <person name="Cao Z.J."/>
            <person name="Liu M.L."/>
            <person name="Li W.X."/>
            <person name="Yi H."/>
            <person name="Jiang L."/>
            <person name="Wu Y.L."/>
        </authorList>
    </citation>
    <scope>FUNCTION</scope>
    <source>
        <tissue>Venom gland</tissue>
    </source>
</reference>
<keyword id="KW-0002">3D-structure</keyword>
<keyword id="KW-0903">Direct protein sequencing</keyword>
<keyword id="KW-1015">Disulfide bond</keyword>
<keyword id="KW-0872">Ion channel impairing toxin</keyword>
<keyword id="KW-0528">Neurotoxin</keyword>
<keyword id="KW-0632">Potassium channel impairing toxin</keyword>
<keyword id="KW-0964">Secreted</keyword>
<keyword id="KW-0732">Signal</keyword>
<keyword id="KW-0800">Toxin</keyword>
<keyword id="KW-1220">Voltage-gated potassium channel impairing toxin</keyword>
<name>KAX82_OLIMR</name>
<evidence type="ECO:0000269" key="1">
    <source>
    </source>
</evidence>
<evidence type="ECO:0000269" key="2">
    <source>
    </source>
</evidence>
<evidence type="ECO:0000269" key="3">
    <source>
    </source>
</evidence>
<evidence type="ECO:0000269" key="4">
    <source>
    </source>
</evidence>
<evidence type="ECO:0000269" key="5">
    <source>
    </source>
</evidence>
<evidence type="ECO:0000303" key="6">
    <source>
    </source>
</evidence>
<evidence type="ECO:0000303" key="7">
    <source>
    </source>
</evidence>
<evidence type="ECO:0000305" key="8"/>
<evidence type="ECO:0000305" key="9">
    <source>
    </source>
</evidence>
<evidence type="ECO:0000305" key="10">
    <source>
    </source>
</evidence>
<evidence type="ECO:0000312" key="11">
    <source>
        <dbReference type="PDB" id="1WM7"/>
    </source>
</evidence>
<evidence type="ECO:0007829" key="12">
    <source>
        <dbReference type="PDB" id="1WM7"/>
    </source>
</evidence>
<sequence length="57" mass="6318">MSRLYAIILIALVFNVVMTITPDMKVEAATCEDCPEHCATQNARAKCDNDKCVCEPK</sequence>
<comment type="function">
    <text evidence="2 3 4">This toxin inhibits rKv1.1/KCNA1 (100% inhibition at 3 uM), Kv1.3/KCNA3 (human, mouse and rat) (IC(50)=269-467 nM), shaker IR (60% at 3 uM) and activates the mouse capsaicin receptor TRPV1 (EC(50)=132 uM, at 20 degrees Celsius), a non-selective cation channel expressed by sensory neurons of the pain pathway (PubMed:20889474, PubMed:26389953). In vivo, intraplantar injection of this toxin in WT mice hind paw shows significant acute pain, whereas no pain is observed when the toxin is injected into TRPV1 KO mice (PubMed:26389953). In addition, subcutaneous injection into mice (185 mg) produces an excitation of the animal, but no lethality, whereas injection into cockroaches does not provoke lethality as well (PubMed:9151979).</text>
</comment>
<comment type="subcellular location">
    <subcellularLocation>
        <location evidence="5">Secreted</location>
    </subcellularLocation>
</comment>
<comment type="tissue specificity">
    <text evidence="10">Expressed by the venom gland.</text>
</comment>
<comment type="domain">
    <text evidence="1">Has the structural arrangement of an alpha-helix connected to a beta-sheet by disulfide bonds (CSalpha/beta).</text>
</comment>
<comment type="mass spectrometry" mass="3178.6" method="MALDI" evidence="4"/>
<comment type="mass spectrometry" mass="3177.47" method="MALDI" evidence="5"/>
<comment type="mass spectrometry" mass="3177.0" method="Electrospray" evidence="1"/>
<comment type="mass spectrometry" mass="3177.04" method="MALDI" evidence="2"/>
<comment type="miscellaneous">
    <text evidence="9">Negative results: does not block mKv1.1/KCNA1 (PubMed:26389953). Does not inhibit rKv1.2/KCNA2, rKv1.4/KCNA4, rKv1.5/KCNA5, rKv1.6/KCNA6, rKv11.1/KCNH2/ERG1 (PubMed:20889474). Shows a very weak inhibition of Kv7.1/KCNQ1 channels (4% at 10 uM) (PubMed:22511981).</text>
</comment>
<comment type="similarity">
    <text evidence="8">Belongs to the short scorpion toxin superfamily. Potassium channel inhibitor family. Alpha-KTx 08 subfamily.</text>
</comment>
<accession>Q9U8D2</accession>
<accession>Q9U522</accession>
<organism>
    <name type="scientific">Olivierus martensii</name>
    <name type="common">Manchurian scorpion</name>
    <name type="synonym">Mesobuthus martensii</name>
    <dbReference type="NCBI Taxonomy" id="34649"/>
    <lineage>
        <taxon>Eukaryota</taxon>
        <taxon>Metazoa</taxon>
        <taxon>Ecdysozoa</taxon>
        <taxon>Arthropoda</taxon>
        <taxon>Chelicerata</taxon>
        <taxon>Arachnida</taxon>
        <taxon>Scorpiones</taxon>
        <taxon>Buthida</taxon>
        <taxon>Buthoidea</taxon>
        <taxon>Buthidae</taxon>
        <taxon>Olivierus</taxon>
    </lineage>
</organism>
<proteinExistence type="evidence at protein level"/>
<feature type="signal peptide" evidence="1 4 5">
    <location>
        <begin position="1"/>
        <end position="28"/>
    </location>
</feature>
<feature type="peptide" id="PRO_0000035348" description="Potassium channel toxin alpha-KTx 8.2" evidence="5">
    <location>
        <begin position="29"/>
        <end position="57"/>
    </location>
</feature>
<feature type="disulfide bond" evidence="1 11">
    <location>
        <begin position="31"/>
        <end position="47"/>
    </location>
</feature>
<feature type="disulfide bond" evidence="1 11">
    <location>
        <begin position="34"/>
        <end position="52"/>
    </location>
</feature>
<feature type="disulfide bond" evidence="1 11">
    <location>
        <begin position="38"/>
        <end position="54"/>
    </location>
</feature>
<feature type="sequence conflict" description="In Ref. 2; AAF24057." evidence="8" ref="2">
    <original>V</original>
    <variation>I</variation>
    <location>
        <position position="17"/>
    </location>
</feature>
<feature type="sequence conflict" description="In Ref. 2; AAF24057." evidence="8" ref="2">
    <original>T</original>
    <variation>I</variation>
    <location>
        <position position="21"/>
    </location>
</feature>
<feature type="helix" evidence="12">
    <location>
        <begin position="31"/>
        <end position="33"/>
    </location>
</feature>
<feature type="turn" evidence="12">
    <location>
        <begin position="35"/>
        <end position="42"/>
    </location>
</feature>
<feature type="strand" evidence="12">
    <location>
        <begin position="44"/>
        <end position="46"/>
    </location>
</feature>
<feature type="strand" evidence="12">
    <location>
        <begin position="48"/>
        <end position="51"/>
    </location>
</feature>
<feature type="strand" evidence="12">
    <location>
        <begin position="53"/>
        <end position="55"/>
    </location>
</feature>